<accession>Q6FSU2</accession>
<feature type="transit peptide" description="Mitochondrion" evidence="1">
    <location>
        <begin position="1"/>
        <end position="15"/>
    </location>
</feature>
<feature type="chain" id="PRO_0000413398" description="Glutamyl-tRNA(Gln) amidotransferase subunit F, mitochondrial">
    <location>
        <begin position="16"/>
        <end position="173"/>
    </location>
</feature>
<keyword id="KW-0067">ATP-binding</keyword>
<keyword id="KW-0436">Ligase</keyword>
<keyword id="KW-0472">Membrane</keyword>
<keyword id="KW-0496">Mitochondrion</keyword>
<keyword id="KW-0999">Mitochondrion inner membrane</keyword>
<keyword id="KW-0547">Nucleotide-binding</keyword>
<keyword id="KW-0648">Protein biosynthesis</keyword>
<keyword id="KW-1185">Reference proteome</keyword>
<keyword id="KW-0809">Transit peptide</keyword>
<name>GATF_CANGA</name>
<proteinExistence type="inferred from homology"/>
<evidence type="ECO:0000255" key="1">
    <source>
        <dbReference type="HAMAP-Rule" id="MF_03151"/>
    </source>
</evidence>
<organism>
    <name type="scientific">Candida glabrata (strain ATCC 2001 / BCRC 20586 / JCM 3761 / NBRC 0622 / NRRL Y-65 / CBS 138)</name>
    <name type="common">Yeast</name>
    <name type="synonym">Nakaseomyces glabratus</name>
    <dbReference type="NCBI Taxonomy" id="284593"/>
    <lineage>
        <taxon>Eukaryota</taxon>
        <taxon>Fungi</taxon>
        <taxon>Dikarya</taxon>
        <taxon>Ascomycota</taxon>
        <taxon>Saccharomycotina</taxon>
        <taxon>Saccharomycetes</taxon>
        <taxon>Saccharomycetales</taxon>
        <taxon>Saccharomycetaceae</taxon>
        <taxon>Nakaseomyces</taxon>
    </lineage>
</organism>
<reference key="1">
    <citation type="journal article" date="2004" name="Nature">
        <title>Genome evolution in yeasts.</title>
        <authorList>
            <person name="Dujon B."/>
            <person name="Sherman D."/>
            <person name="Fischer G."/>
            <person name="Durrens P."/>
            <person name="Casaregola S."/>
            <person name="Lafontaine I."/>
            <person name="de Montigny J."/>
            <person name="Marck C."/>
            <person name="Neuveglise C."/>
            <person name="Talla E."/>
            <person name="Goffard N."/>
            <person name="Frangeul L."/>
            <person name="Aigle M."/>
            <person name="Anthouard V."/>
            <person name="Babour A."/>
            <person name="Barbe V."/>
            <person name="Barnay S."/>
            <person name="Blanchin S."/>
            <person name="Beckerich J.-M."/>
            <person name="Beyne E."/>
            <person name="Bleykasten C."/>
            <person name="Boisrame A."/>
            <person name="Boyer J."/>
            <person name="Cattolico L."/>
            <person name="Confanioleri F."/>
            <person name="de Daruvar A."/>
            <person name="Despons L."/>
            <person name="Fabre E."/>
            <person name="Fairhead C."/>
            <person name="Ferry-Dumazet H."/>
            <person name="Groppi A."/>
            <person name="Hantraye F."/>
            <person name="Hennequin C."/>
            <person name="Jauniaux N."/>
            <person name="Joyet P."/>
            <person name="Kachouri R."/>
            <person name="Kerrest A."/>
            <person name="Koszul R."/>
            <person name="Lemaire M."/>
            <person name="Lesur I."/>
            <person name="Ma L."/>
            <person name="Muller H."/>
            <person name="Nicaud J.-M."/>
            <person name="Nikolski M."/>
            <person name="Oztas S."/>
            <person name="Ozier-Kalogeropoulos O."/>
            <person name="Pellenz S."/>
            <person name="Potier S."/>
            <person name="Richard G.-F."/>
            <person name="Straub M.-L."/>
            <person name="Suleau A."/>
            <person name="Swennen D."/>
            <person name="Tekaia F."/>
            <person name="Wesolowski-Louvel M."/>
            <person name="Westhof E."/>
            <person name="Wirth B."/>
            <person name="Zeniou-Meyer M."/>
            <person name="Zivanovic Y."/>
            <person name="Bolotin-Fukuhara M."/>
            <person name="Thierry A."/>
            <person name="Bouchier C."/>
            <person name="Caudron B."/>
            <person name="Scarpelli C."/>
            <person name="Gaillardin C."/>
            <person name="Weissenbach J."/>
            <person name="Wincker P."/>
            <person name="Souciet J.-L."/>
        </authorList>
    </citation>
    <scope>NUCLEOTIDE SEQUENCE [LARGE SCALE GENOMIC DNA]</scope>
    <source>
        <strain>ATCC 2001 / BCRC 20586 / JCM 3761 / NBRC 0622 / NRRL Y-65 / CBS 138</strain>
    </source>
</reference>
<protein>
    <recommendedName>
        <fullName evidence="1">Glutamyl-tRNA(Gln) amidotransferase subunit F, mitochondrial</fullName>
        <shortName evidence="1">Glu-AdT subunit F</shortName>
        <ecNumber evidence="1">6.3.5.-</ecNumber>
    </recommendedName>
</protein>
<gene>
    <name evidence="1" type="primary">GTF1</name>
    <name type="ordered locus">CAGL0G07821g</name>
</gene>
<comment type="function">
    <text evidence="1">Allows the formation of correctly charged Gln-tRNA(Gln) through the transamidation of misacylated Glu-tRNA(Gln) in the mitochondria. The reaction takes place in the presence of glutamine and ATP through an activated gamma-phospho-Glu-tRNA(Gln). Required for proper protein synthesis within the mitochondrion.</text>
</comment>
<comment type="catalytic activity">
    <reaction evidence="1">
        <text>L-glutamyl-tRNA(Gln) + L-glutamine + ATP + H2O = L-glutaminyl-tRNA(Gln) + L-glutamate + ADP + phosphate + H(+)</text>
        <dbReference type="Rhea" id="RHEA:17521"/>
        <dbReference type="Rhea" id="RHEA-COMP:9681"/>
        <dbReference type="Rhea" id="RHEA-COMP:9684"/>
        <dbReference type="ChEBI" id="CHEBI:15377"/>
        <dbReference type="ChEBI" id="CHEBI:15378"/>
        <dbReference type="ChEBI" id="CHEBI:29985"/>
        <dbReference type="ChEBI" id="CHEBI:30616"/>
        <dbReference type="ChEBI" id="CHEBI:43474"/>
        <dbReference type="ChEBI" id="CHEBI:58359"/>
        <dbReference type="ChEBI" id="CHEBI:78520"/>
        <dbReference type="ChEBI" id="CHEBI:78521"/>
        <dbReference type="ChEBI" id="CHEBI:456216"/>
    </reaction>
</comment>
<comment type="subunit">
    <text evidence="1">Subunit of the heterotrimeric GatFAB amidotransferase (AdT) complex, composed of A, B and F subunits.</text>
</comment>
<comment type="subcellular location">
    <subcellularLocation>
        <location evidence="1">Mitochondrion inner membrane</location>
        <topology evidence="1">Peripheral membrane protein</topology>
        <orientation evidence="1">Matrix side</orientation>
    </subcellularLocation>
</comment>
<comment type="similarity">
    <text evidence="1">Belongs to the GatF family.</text>
</comment>
<dbReference type="EC" id="6.3.5.-" evidence="1"/>
<dbReference type="EMBL" id="CR380953">
    <property type="protein sequence ID" value="CAG59629.1"/>
    <property type="molecule type" value="Genomic_DNA"/>
</dbReference>
<dbReference type="RefSeq" id="XP_446702.1">
    <property type="nucleotide sequence ID" value="XM_446702.1"/>
</dbReference>
<dbReference type="SMR" id="Q6FSU2"/>
<dbReference type="FunCoup" id="Q6FSU2">
    <property type="interactions" value="86"/>
</dbReference>
<dbReference type="STRING" id="284593.Q6FSU2"/>
<dbReference type="EnsemblFungi" id="CAGL0G07821g-T">
    <property type="protein sequence ID" value="CAGL0G07821g-T-p1"/>
    <property type="gene ID" value="CAGL0G07821g"/>
</dbReference>
<dbReference type="KEGG" id="cgr:2888379"/>
<dbReference type="CGD" id="CAL0137701">
    <property type="gene designation" value="CAGL0G07821g"/>
</dbReference>
<dbReference type="VEuPathDB" id="FungiDB:CAGL0G07821g"/>
<dbReference type="eggNOG" id="ENOG502S3RS">
    <property type="taxonomic scope" value="Eukaryota"/>
</dbReference>
<dbReference type="HOGENOM" id="CLU_120617_0_0_1"/>
<dbReference type="InParanoid" id="Q6FSU2"/>
<dbReference type="Proteomes" id="UP000002428">
    <property type="component" value="Chromosome G"/>
</dbReference>
<dbReference type="GO" id="GO:0030956">
    <property type="term" value="C:glutamyl-tRNA(Gln) amidotransferase complex"/>
    <property type="evidence" value="ECO:0007669"/>
    <property type="project" value="UniProtKB-UniRule"/>
</dbReference>
<dbReference type="GO" id="GO:0005743">
    <property type="term" value="C:mitochondrial inner membrane"/>
    <property type="evidence" value="ECO:0007669"/>
    <property type="project" value="UniProtKB-SubCell"/>
</dbReference>
<dbReference type="GO" id="GO:0005524">
    <property type="term" value="F:ATP binding"/>
    <property type="evidence" value="ECO:0007669"/>
    <property type="project" value="UniProtKB-KW"/>
</dbReference>
<dbReference type="GO" id="GO:0050567">
    <property type="term" value="F:glutaminyl-tRNA synthase (glutamine-hydrolyzing) activity"/>
    <property type="evidence" value="ECO:0007669"/>
    <property type="project" value="UniProtKB-UniRule"/>
</dbReference>
<dbReference type="GO" id="GO:0070681">
    <property type="term" value="P:glutaminyl-tRNAGln biosynthesis via transamidation"/>
    <property type="evidence" value="ECO:0007669"/>
    <property type="project" value="UniProtKB-UniRule"/>
</dbReference>
<dbReference type="GO" id="GO:0032543">
    <property type="term" value="P:mitochondrial translation"/>
    <property type="evidence" value="ECO:0007669"/>
    <property type="project" value="UniProtKB-UniRule"/>
</dbReference>
<dbReference type="CDD" id="cd21422">
    <property type="entry name" value="GatF"/>
    <property type="match status" value="1"/>
</dbReference>
<dbReference type="HAMAP" id="MF_03151">
    <property type="entry name" value="GatF"/>
    <property type="match status" value="1"/>
</dbReference>
<dbReference type="InterPro" id="IPR027499">
    <property type="entry name" value="GatF"/>
</dbReference>
<dbReference type="Pfam" id="PF20977">
    <property type="entry name" value="GatF"/>
    <property type="match status" value="1"/>
</dbReference>
<sequence>MSRFMIRAVFFRRYTAATVGKPFRNVAEVKQYLAKQTWSIDEILHGEDTGKAAKQGVPTEEEVRKLLALCAFPVEDADLQNSKRILVKQLSFINKLHETSVDDQDKNLDENYARLLPRQNKALTYDDLLKKIDGIKQDEATGEPTGSWDSTGLAKMRKDNYFIVRQGLLKNRK</sequence>